<reference key="1">
    <citation type="journal article" date="2001" name="Nucleic Acids Res.">
        <title>The complete genome sequence of the murine respiratory pathogen Mycoplasma pulmonis.</title>
        <authorList>
            <person name="Chambaud I."/>
            <person name="Heilig R."/>
            <person name="Ferris S."/>
            <person name="Barbe V."/>
            <person name="Samson D."/>
            <person name="Galisson F."/>
            <person name="Moszer I."/>
            <person name="Dybvig K."/>
            <person name="Wroblewski H."/>
            <person name="Viari A."/>
            <person name="Rocha E.P.C."/>
            <person name="Blanchard A."/>
        </authorList>
    </citation>
    <scope>NUCLEOTIDE SEQUENCE [LARGE SCALE GENOMIC DNA]</scope>
    <source>
        <strain>UAB CTIP</strain>
    </source>
</reference>
<sequence>MTDKKLVKELAIEFGGSEKNVGAIEVQIAILTHDIERLKIHFETNKKDKHSKRGFIAKINKRKKLLAYLKDVNFESYQTTIQKLKIRK</sequence>
<organism>
    <name type="scientific">Mycoplasmopsis pulmonis (strain UAB CTIP)</name>
    <name type="common">Mycoplasma pulmonis</name>
    <dbReference type="NCBI Taxonomy" id="272635"/>
    <lineage>
        <taxon>Bacteria</taxon>
        <taxon>Bacillati</taxon>
        <taxon>Mycoplasmatota</taxon>
        <taxon>Mycoplasmoidales</taxon>
        <taxon>Metamycoplasmataceae</taxon>
        <taxon>Mycoplasmopsis</taxon>
    </lineage>
</organism>
<feature type="chain" id="PRO_0000115485" description="Small ribosomal subunit protein uS15">
    <location>
        <begin position="1"/>
        <end position="88"/>
    </location>
</feature>
<dbReference type="EMBL" id="AL445564">
    <property type="protein sequence ID" value="CAC13501.1"/>
    <property type="molecule type" value="Genomic_DNA"/>
</dbReference>
<dbReference type="PIR" id="H90552">
    <property type="entry name" value="H90552"/>
</dbReference>
<dbReference type="RefSeq" id="WP_010925132.1">
    <property type="nucleotide sequence ID" value="NC_002771.1"/>
</dbReference>
<dbReference type="SMR" id="Q98QN3"/>
<dbReference type="STRING" id="272635.gene:17576919"/>
<dbReference type="KEGG" id="mpu:MYPU_3280"/>
<dbReference type="eggNOG" id="COG0184">
    <property type="taxonomic scope" value="Bacteria"/>
</dbReference>
<dbReference type="HOGENOM" id="CLU_148518_0_0_14"/>
<dbReference type="BioCyc" id="MPUL272635:G1GT6-328-MONOMER"/>
<dbReference type="Proteomes" id="UP000000528">
    <property type="component" value="Chromosome"/>
</dbReference>
<dbReference type="GO" id="GO:0022627">
    <property type="term" value="C:cytosolic small ribosomal subunit"/>
    <property type="evidence" value="ECO:0007669"/>
    <property type="project" value="TreeGrafter"/>
</dbReference>
<dbReference type="GO" id="GO:0019843">
    <property type="term" value="F:rRNA binding"/>
    <property type="evidence" value="ECO:0007669"/>
    <property type="project" value="UniProtKB-UniRule"/>
</dbReference>
<dbReference type="GO" id="GO:0003735">
    <property type="term" value="F:structural constituent of ribosome"/>
    <property type="evidence" value="ECO:0007669"/>
    <property type="project" value="InterPro"/>
</dbReference>
<dbReference type="GO" id="GO:0006412">
    <property type="term" value="P:translation"/>
    <property type="evidence" value="ECO:0007669"/>
    <property type="project" value="UniProtKB-UniRule"/>
</dbReference>
<dbReference type="CDD" id="cd00353">
    <property type="entry name" value="Ribosomal_S15p_S13e"/>
    <property type="match status" value="1"/>
</dbReference>
<dbReference type="Gene3D" id="6.10.250.3130">
    <property type="match status" value="1"/>
</dbReference>
<dbReference type="Gene3D" id="1.10.287.10">
    <property type="entry name" value="S15/NS1, RNA-binding"/>
    <property type="match status" value="1"/>
</dbReference>
<dbReference type="HAMAP" id="MF_01343_B">
    <property type="entry name" value="Ribosomal_uS15_B"/>
    <property type="match status" value="1"/>
</dbReference>
<dbReference type="InterPro" id="IPR000589">
    <property type="entry name" value="Ribosomal_uS15"/>
</dbReference>
<dbReference type="InterPro" id="IPR005290">
    <property type="entry name" value="Ribosomal_uS15_bac-type"/>
</dbReference>
<dbReference type="InterPro" id="IPR009068">
    <property type="entry name" value="uS15_NS1_RNA-bd_sf"/>
</dbReference>
<dbReference type="NCBIfam" id="TIGR00952">
    <property type="entry name" value="S15_bact"/>
    <property type="match status" value="1"/>
</dbReference>
<dbReference type="PANTHER" id="PTHR23321">
    <property type="entry name" value="RIBOSOMAL PROTEIN S15, BACTERIAL AND ORGANELLAR"/>
    <property type="match status" value="1"/>
</dbReference>
<dbReference type="PANTHER" id="PTHR23321:SF26">
    <property type="entry name" value="SMALL RIBOSOMAL SUBUNIT PROTEIN US15M"/>
    <property type="match status" value="1"/>
</dbReference>
<dbReference type="Pfam" id="PF00312">
    <property type="entry name" value="Ribosomal_S15"/>
    <property type="match status" value="1"/>
</dbReference>
<dbReference type="SMART" id="SM01387">
    <property type="entry name" value="Ribosomal_S15"/>
    <property type="match status" value="1"/>
</dbReference>
<dbReference type="SUPFAM" id="SSF47060">
    <property type="entry name" value="S15/NS1 RNA-binding domain"/>
    <property type="match status" value="1"/>
</dbReference>
<dbReference type="PROSITE" id="PS00362">
    <property type="entry name" value="RIBOSOMAL_S15"/>
    <property type="match status" value="1"/>
</dbReference>
<evidence type="ECO:0000255" key="1">
    <source>
        <dbReference type="HAMAP-Rule" id="MF_01343"/>
    </source>
</evidence>
<evidence type="ECO:0000305" key="2"/>
<protein>
    <recommendedName>
        <fullName evidence="1">Small ribosomal subunit protein uS15</fullName>
    </recommendedName>
    <alternativeName>
        <fullName evidence="2">30S ribosomal protein S15</fullName>
    </alternativeName>
</protein>
<comment type="function">
    <text evidence="1">One of the primary rRNA binding proteins, it binds directly to 16S rRNA where it helps nucleate assembly of the platform of the 30S subunit by binding and bridging several RNA helices of the 16S rRNA.</text>
</comment>
<comment type="function">
    <text evidence="1">Forms an intersubunit bridge (bridge B4) with the 23S rRNA of the 50S subunit in the ribosome.</text>
</comment>
<comment type="subunit">
    <text evidence="1">Part of the 30S ribosomal subunit. Forms a bridge to the 50S subunit in the 70S ribosome, contacting the 23S rRNA.</text>
</comment>
<comment type="similarity">
    <text evidence="1">Belongs to the universal ribosomal protein uS15 family.</text>
</comment>
<name>RS15_MYCPU</name>
<accession>Q98QN3</accession>
<proteinExistence type="inferred from homology"/>
<gene>
    <name evidence="1" type="primary">rpsO</name>
    <name type="ordered locus">MYPU_3280</name>
</gene>
<keyword id="KW-1185">Reference proteome</keyword>
<keyword id="KW-0687">Ribonucleoprotein</keyword>
<keyword id="KW-0689">Ribosomal protein</keyword>
<keyword id="KW-0694">RNA-binding</keyword>
<keyword id="KW-0699">rRNA-binding</keyword>